<gene>
    <name type="primary">infB</name>
    <name type="ordered locus">TP_0891</name>
</gene>
<protein>
    <recommendedName>
        <fullName>Translation initiation factor IF-2</fullName>
    </recommendedName>
</protein>
<reference key="1">
    <citation type="journal article" date="1998" name="Science">
        <title>Complete genome sequence of Treponema pallidum, the syphilis spirochete.</title>
        <authorList>
            <person name="Fraser C.M."/>
            <person name="Norris S.J."/>
            <person name="Weinstock G.M."/>
            <person name="White O."/>
            <person name="Sutton G.G."/>
            <person name="Dodson R.J."/>
            <person name="Gwinn M.L."/>
            <person name="Hickey E.K."/>
            <person name="Clayton R.A."/>
            <person name="Ketchum K.A."/>
            <person name="Sodergren E."/>
            <person name="Hardham J.M."/>
            <person name="McLeod M.P."/>
            <person name="Salzberg S.L."/>
            <person name="Peterson J.D."/>
            <person name="Khalak H.G."/>
            <person name="Richardson D.L."/>
            <person name="Howell J.K."/>
            <person name="Chidambaram M."/>
            <person name="Utterback T.R."/>
            <person name="McDonald L.A."/>
            <person name="Artiach P."/>
            <person name="Bowman C."/>
            <person name="Cotton M.D."/>
            <person name="Fujii C."/>
            <person name="Garland S.A."/>
            <person name="Hatch B."/>
            <person name="Horst K."/>
            <person name="Roberts K.M."/>
            <person name="Sandusky M."/>
            <person name="Weidman J.F."/>
            <person name="Smith H.O."/>
            <person name="Venter J.C."/>
        </authorList>
    </citation>
    <scope>NUCLEOTIDE SEQUENCE [LARGE SCALE GENOMIC DNA]</scope>
    <source>
        <strain>Nichols</strain>
    </source>
</reference>
<keyword id="KW-0963">Cytoplasm</keyword>
<keyword id="KW-0342">GTP-binding</keyword>
<keyword id="KW-0396">Initiation factor</keyword>
<keyword id="KW-0547">Nucleotide-binding</keyword>
<keyword id="KW-0648">Protein biosynthesis</keyword>
<keyword id="KW-1185">Reference proteome</keyword>
<proteinExistence type="inferred from homology"/>
<feature type="chain" id="PRO_0000137275" description="Translation initiation factor IF-2">
    <location>
        <begin position="1"/>
        <end position="842"/>
    </location>
</feature>
<feature type="domain" description="tr-type G">
    <location>
        <begin position="328"/>
        <end position="497"/>
    </location>
</feature>
<feature type="region of interest" description="Disordered" evidence="2">
    <location>
        <begin position="1"/>
        <end position="41"/>
    </location>
</feature>
<feature type="region of interest" description="Disordered" evidence="2">
    <location>
        <begin position="112"/>
        <end position="219"/>
    </location>
</feature>
<feature type="region of interest" description="G1" evidence="1">
    <location>
        <begin position="337"/>
        <end position="344"/>
    </location>
</feature>
<feature type="region of interest" description="G2" evidence="1">
    <location>
        <begin position="362"/>
        <end position="366"/>
    </location>
</feature>
<feature type="region of interest" description="G3" evidence="1">
    <location>
        <begin position="383"/>
        <end position="386"/>
    </location>
</feature>
<feature type="region of interest" description="G4" evidence="1">
    <location>
        <begin position="437"/>
        <end position="440"/>
    </location>
</feature>
<feature type="region of interest" description="G5" evidence="1">
    <location>
        <begin position="473"/>
        <end position="475"/>
    </location>
</feature>
<feature type="compositionally biased region" description="Basic and acidic residues" evidence="2">
    <location>
        <begin position="32"/>
        <end position="41"/>
    </location>
</feature>
<feature type="compositionally biased region" description="Basic and acidic residues" evidence="2">
    <location>
        <begin position="153"/>
        <end position="165"/>
    </location>
</feature>
<feature type="binding site" evidence="1">
    <location>
        <begin position="337"/>
        <end position="344"/>
    </location>
    <ligand>
        <name>GTP</name>
        <dbReference type="ChEBI" id="CHEBI:37565"/>
    </ligand>
</feature>
<feature type="binding site" evidence="1">
    <location>
        <begin position="383"/>
        <end position="387"/>
    </location>
    <ligand>
        <name>GTP</name>
        <dbReference type="ChEBI" id="CHEBI:37565"/>
    </ligand>
</feature>
<feature type="binding site" evidence="1">
    <location>
        <begin position="437"/>
        <end position="440"/>
    </location>
    <ligand>
        <name>GTP</name>
        <dbReference type="ChEBI" id="CHEBI:37565"/>
    </ligand>
</feature>
<organism>
    <name type="scientific">Treponema pallidum (strain Nichols)</name>
    <dbReference type="NCBI Taxonomy" id="243276"/>
    <lineage>
        <taxon>Bacteria</taxon>
        <taxon>Pseudomonadati</taxon>
        <taxon>Spirochaetota</taxon>
        <taxon>Spirochaetia</taxon>
        <taxon>Spirochaetales</taxon>
        <taxon>Treponemataceae</taxon>
        <taxon>Treponema</taxon>
    </lineage>
</organism>
<name>IF2_TREPA</name>
<accession>O83861</accession>
<sequence>MVAKVTAARRVSCADENRTPGDASQATISAAPEDKKQGFPDIREDGVARGVSASCGAVQNAASAQVPGARTPGVIGVPVASKTVEEARGGGAKRVITKRVGGVFVLDDSAARPNRKAGNLASGARLSRFSRSDRQRSDGFSGTQARANAGGVRRGEGRPFARDFSRGSTGGYRPAVRGPARPAGRVGSGPRGPAPLQVGAGKPAQNKRSFRGRKQQTYQYQHKDRLELEEKLLQQKKKNKEKLAAVPRSVEIMESVSVADLAKKMNLKASELIGKLFGMGMMVTMNQSIDADTATILASEYGCEVRIVSLYDETIIESVGDEHAVLRARPPVVTVMGHVDHGKTKTLDAIRSTRVAEGEFGGITQHIGAYAVSTPKGSITFLDTPGHEAFTMMRARGAEITDIVVLIVAADDGVMPQTIEAINHAKASKVPIIVAINKIDRADANPNKVMTRLAELGLAPEEWGGDTMYVSISALQGIGLDLLLDAIMLQAEVMELRANYGCCAEGRIIESRIDHGRGIVASVIVRRGVLRVGDTYVAGVYSGRVRAIFNDQGEKIQEATPSMPVEILGLEGMPNAGDPFQVTDSERIARQISLKRQELRRYENARNVKRITLDKLYESIEKGSVSEFKVIIKGDVQGSVEALKQSLEKLSTDEVQLRVIHSSVGAINDSDVMLAAADSNVTIVGFNVRPTPQAAVLAERERVEIKKYTVIYQAVEEMERAMEGMLKPSLKEVVLGSAEVRKVFKIPKVGSVAGVYVLEGVMKRNAIVHVVRDGIVLHSGKVSSLRREKDDVKEVHSGFECGVGVENYFDFRERDRLECAEMKEVSRKLKDAALSDAARLQG</sequence>
<dbReference type="EMBL" id="AE000520">
    <property type="protein sequence ID" value="AAC26581.1"/>
    <property type="molecule type" value="Genomic_DNA"/>
</dbReference>
<dbReference type="PIR" id="H71269">
    <property type="entry name" value="H71269"/>
</dbReference>
<dbReference type="SMR" id="O83861"/>
<dbReference type="IntAct" id="O83861">
    <property type="interactions" value="2"/>
</dbReference>
<dbReference type="STRING" id="243276.TP_0891"/>
<dbReference type="EnsemblBacteria" id="AAC26581">
    <property type="protein sequence ID" value="AAC26581"/>
    <property type="gene ID" value="TP_0891"/>
</dbReference>
<dbReference type="KEGG" id="tpa:TP_0891"/>
<dbReference type="KEGG" id="tpw:TPANIC_0891"/>
<dbReference type="eggNOG" id="COG0532">
    <property type="taxonomic scope" value="Bacteria"/>
</dbReference>
<dbReference type="HOGENOM" id="CLU_006301_5_1_12"/>
<dbReference type="Proteomes" id="UP000000811">
    <property type="component" value="Chromosome"/>
</dbReference>
<dbReference type="GO" id="GO:0005829">
    <property type="term" value="C:cytosol"/>
    <property type="evidence" value="ECO:0007669"/>
    <property type="project" value="TreeGrafter"/>
</dbReference>
<dbReference type="GO" id="GO:0005525">
    <property type="term" value="F:GTP binding"/>
    <property type="evidence" value="ECO:0007669"/>
    <property type="project" value="UniProtKB-KW"/>
</dbReference>
<dbReference type="GO" id="GO:0003924">
    <property type="term" value="F:GTPase activity"/>
    <property type="evidence" value="ECO:0007669"/>
    <property type="project" value="UniProtKB-UniRule"/>
</dbReference>
<dbReference type="GO" id="GO:0003743">
    <property type="term" value="F:translation initiation factor activity"/>
    <property type="evidence" value="ECO:0007669"/>
    <property type="project" value="UniProtKB-UniRule"/>
</dbReference>
<dbReference type="CDD" id="cd01887">
    <property type="entry name" value="IF2_eIF5B"/>
    <property type="match status" value="1"/>
</dbReference>
<dbReference type="CDD" id="cd03702">
    <property type="entry name" value="IF2_mtIF2_II"/>
    <property type="match status" value="1"/>
</dbReference>
<dbReference type="CDD" id="cd03692">
    <property type="entry name" value="mtIF2_IVc"/>
    <property type="match status" value="1"/>
</dbReference>
<dbReference type="FunFam" id="2.40.30.10:FF:000008">
    <property type="entry name" value="Translation initiation factor IF-2"/>
    <property type="match status" value="1"/>
</dbReference>
<dbReference type="FunFam" id="2.40.30.10:FF:000054">
    <property type="entry name" value="Translation initiation factor IF-2"/>
    <property type="match status" value="1"/>
</dbReference>
<dbReference type="FunFam" id="3.40.50.10050:FF:000001">
    <property type="entry name" value="Translation initiation factor IF-2"/>
    <property type="match status" value="1"/>
</dbReference>
<dbReference type="FunFam" id="3.40.50.300:FF:000019">
    <property type="entry name" value="Translation initiation factor IF-2"/>
    <property type="match status" value="1"/>
</dbReference>
<dbReference type="Gene3D" id="3.40.50.300">
    <property type="entry name" value="P-loop containing nucleotide triphosphate hydrolases"/>
    <property type="match status" value="1"/>
</dbReference>
<dbReference type="Gene3D" id="2.40.30.10">
    <property type="entry name" value="Translation factors"/>
    <property type="match status" value="2"/>
</dbReference>
<dbReference type="Gene3D" id="3.40.50.10050">
    <property type="entry name" value="Translation initiation factor IF- 2, domain 3"/>
    <property type="match status" value="1"/>
</dbReference>
<dbReference type="HAMAP" id="MF_00100_B">
    <property type="entry name" value="IF_2_B"/>
    <property type="match status" value="1"/>
</dbReference>
<dbReference type="InterPro" id="IPR053905">
    <property type="entry name" value="EF-G-like_DII"/>
</dbReference>
<dbReference type="InterPro" id="IPR044145">
    <property type="entry name" value="IF2_II"/>
</dbReference>
<dbReference type="InterPro" id="IPR006847">
    <property type="entry name" value="IF2_N"/>
</dbReference>
<dbReference type="InterPro" id="IPR027417">
    <property type="entry name" value="P-loop_NTPase"/>
</dbReference>
<dbReference type="InterPro" id="IPR005225">
    <property type="entry name" value="Small_GTP-bd"/>
</dbReference>
<dbReference type="InterPro" id="IPR000795">
    <property type="entry name" value="T_Tr_GTP-bd_dom"/>
</dbReference>
<dbReference type="InterPro" id="IPR000178">
    <property type="entry name" value="TF_IF2_bacterial-like"/>
</dbReference>
<dbReference type="InterPro" id="IPR015760">
    <property type="entry name" value="TIF_IF2"/>
</dbReference>
<dbReference type="InterPro" id="IPR023115">
    <property type="entry name" value="TIF_IF2_dom3"/>
</dbReference>
<dbReference type="InterPro" id="IPR036925">
    <property type="entry name" value="TIF_IF2_dom3_sf"/>
</dbReference>
<dbReference type="InterPro" id="IPR009000">
    <property type="entry name" value="Transl_B-barrel_sf"/>
</dbReference>
<dbReference type="NCBIfam" id="TIGR00487">
    <property type="entry name" value="IF-2"/>
    <property type="match status" value="1"/>
</dbReference>
<dbReference type="NCBIfam" id="TIGR00231">
    <property type="entry name" value="small_GTP"/>
    <property type="match status" value="1"/>
</dbReference>
<dbReference type="PANTHER" id="PTHR43381:SF5">
    <property type="entry name" value="TR-TYPE G DOMAIN-CONTAINING PROTEIN"/>
    <property type="match status" value="1"/>
</dbReference>
<dbReference type="PANTHER" id="PTHR43381">
    <property type="entry name" value="TRANSLATION INITIATION FACTOR IF-2-RELATED"/>
    <property type="match status" value="1"/>
</dbReference>
<dbReference type="Pfam" id="PF22042">
    <property type="entry name" value="EF-G_D2"/>
    <property type="match status" value="1"/>
</dbReference>
<dbReference type="Pfam" id="PF00009">
    <property type="entry name" value="GTP_EFTU"/>
    <property type="match status" value="1"/>
</dbReference>
<dbReference type="Pfam" id="PF11987">
    <property type="entry name" value="IF-2"/>
    <property type="match status" value="1"/>
</dbReference>
<dbReference type="Pfam" id="PF04760">
    <property type="entry name" value="IF2_N"/>
    <property type="match status" value="1"/>
</dbReference>
<dbReference type="SUPFAM" id="SSF52156">
    <property type="entry name" value="Initiation factor IF2/eIF5b, domain 3"/>
    <property type="match status" value="1"/>
</dbReference>
<dbReference type="SUPFAM" id="SSF52540">
    <property type="entry name" value="P-loop containing nucleoside triphosphate hydrolases"/>
    <property type="match status" value="1"/>
</dbReference>
<dbReference type="SUPFAM" id="SSF50447">
    <property type="entry name" value="Translation proteins"/>
    <property type="match status" value="2"/>
</dbReference>
<dbReference type="PROSITE" id="PS51722">
    <property type="entry name" value="G_TR_2"/>
    <property type="match status" value="1"/>
</dbReference>
<dbReference type="PROSITE" id="PS01176">
    <property type="entry name" value="IF2"/>
    <property type="match status" value="1"/>
</dbReference>
<comment type="function">
    <text evidence="1">One of the essential components for the initiation of protein synthesis. Protects formylmethionyl-tRNA from spontaneous hydrolysis and promotes its binding to the 30S ribosomal subunits. Also involved in the hydrolysis of GTP during the formation of the 70S ribosomal complex (By similarity).</text>
</comment>
<comment type="subcellular location">
    <subcellularLocation>
        <location evidence="1">Cytoplasm</location>
    </subcellularLocation>
</comment>
<comment type="similarity">
    <text evidence="3">Belongs to the TRAFAC class translation factor GTPase superfamily. Classic translation factor GTPase family. IF-2 subfamily.</text>
</comment>
<evidence type="ECO:0000250" key="1"/>
<evidence type="ECO:0000256" key="2">
    <source>
        <dbReference type="SAM" id="MobiDB-lite"/>
    </source>
</evidence>
<evidence type="ECO:0000305" key="3"/>